<accession>A8LB04</accession>
<reference key="1">
    <citation type="journal article" date="2007" name="Genome Res.">
        <title>Genome characteristics of facultatively symbiotic Frankia sp. strains reflect host range and host plant biogeography.</title>
        <authorList>
            <person name="Normand P."/>
            <person name="Lapierre P."/>
            <person name="Tisa L.S."/>
            <person name="Gogarten J.P."/>
            <person name="Alloisio N."/>
            <person name="Bagnarol E."/>
            <person name="Bassi C.A."/>
            <person name="Berry A.M."/>
            <person name="Bickhart D.M."/>
            <person name="Choisne N."/>
            <person name="Couloux A."/>
            <person name="Cournoyer B."/>
            <person name="Cruveiller S."/>
            <person name="Daubin V."/>
            <person name="Demange N."/>
            <person name="Francino M.P."/>
            <person name="Goltsman E."/>
            <person name="Huang Y."/>
            <person name="Kopp O.R."/>
            <person name="Labarre L."/>
            <person name="Lapidus A."/>
            <person name="Lavire C."/>
            <person name="Marechal J."/>
            <person name="Martinez M."/>
            <person name="Mastronunzio J.E."/>
            <person name="Mullin B.C."/>
            <person name="Niemann J."/>
            <person name="Pujic P."/>
            <person name="Rawnsley T."/>
            <person name="Rouy Z."/>
            <person name="Schenowitz C."/>
            <person name="Sellstedt A."/>
            <person name="Tavares F."/>
            <person name="Tomkins J.P."/>
            <person name="Vallenet D."/>
            <person name="Valverde C."/>
            <person name="Wall L.G."/>
            <person name="Wang Y."/>
            <person name="Medigue C."/>
            <person name="Benson D.R."/>
        </authorList>
    </citation>
    <scope>NUCLEOTIDE SEQUENCE [LARGE SCALE GENOMIC DNA]</scope>
    <source>
        <strain>EAN1pec</strain>
    </source>
</reference>
<sequence>MPTPTKGARLGGSPAHERLLLANLATALFEHGGITTTEAKARRLRPYAERLVTHAKRGDLHARRRVMRVVRNNSVVHTLFTEIGPRYADRPGGYTRIVKLGPRRGDAAPMARIELVEALTIAQTAVSEAERARGTRFAARKAPTGATAEAADDLKNESPTAAAVAAEAQAEQPTAEAVAADDAATTEAKDTKPES</sequence>
<dbReference type="EMBL" id="CP000820">
    <property type="protein sequence ID" value="ABW15365.1"/>
    <property type="molecule type" value="Genomic_DNA"/>
</dbReference>
<dbReference type="RefSeq" id="WP_020463461.1">
    <property type="nucleotide sequence ID" value="NC_009921.1"/>
</dbReference>
<dbReference type="SMR" id="A8LB04"/>
<dbReference type="STRING" id="298653.Franean1_6021"/>
<dbReference type="KEGG" id="fre:Franean1_6021"/>
<dbReference type="eggNOG" id="COG0203">
    <property type="taxonomic scope" value="Bacteria"/>
</dbReference>
<dbReference type="HOGENOM" id="CLU_074407_0_0_11"/>
<dbReference type="GO" id="GO:0022625">
    <property type="term" value="C:cytosolic large ribosomal subunit"/>
    <property type="evidence" value="ECO:0007669"/>
    <property type="project" value="TreeGrafter"/>
</dbReference>
<dbReference type="GO" id="GO:0003735">
    <property type="term" value="F:structural constituent of ribosome"/>
    <property type="evidence" value="ECO:0007669"/>
    <property type="project" value="InterPro"/>
</dbReference>
<dbReference type="GO" id="GO:0006412">
    <property type="term" value="P:translation"/>
    <property type="evidence" value="ECO:0007669"/>
    <property type="project" value="UniProtKB-UniRule"/>
</dbReference>
<dbReference type="FunFam" id="3.90.1030.10:FF:000001">
    <property type="entry name" value="50S ribosomal protein L17"/>
    <property type="match status" value="1"/>
</dbReference>
<dbReference type="Gene3D" id="3.90.1030.10">
    <property type="entry name" value="Ribosomal protein L17"/>
    <property type="match status" value="1"/>
</dbReference>
<dbReference type="HAMAP" id="MF_01368">
    <property type="entry name" value="Ribosomal_bL17"/>
    <property type="match status" value="1"/>
</dbReference>
<dbReference type="InterPro" id="IPR000456">
    <property type="entry name" value="Ribosomal_bL17"/>
</dbReference>
<dbReference type="InterPro" id="IPR047859">
    <property type="entry name" value="Ribosomal_bL17_CS"/>
</dbReference>
<dbReference type="InterPro" id="IPR036373">
    <property type="entry name" value="Ribosomal_bL17_sf"/>
</dbReference>
<dbReference type="NCBIfam" id="TIGR00059">
    <property type="entry name" value="L17"/>
    <property type="match status" value="1"/>
</dbReference>
<dbReference type="PANTHER" id="PTHR14413:SF16">
    <property type="entry name" value="LARGE RIBOSOMAL SUBUNIT PROTEIN BL17M"/>
    <property type="match status" value="1"/>
</dbReference>
<dbReference type="PANTHER" id="PTHR14413">
    <property type="entry name" value="RIBOSOMAL PROTEIN L17"/>
    <property type="match status" value="1"/>
</dbReference>
<dbReference type="Pfam" id="PF01196">
    <property type="entry name" value="Ribosomal_L17"/>
    <property type="match status" value="1"/>
</dbReference>
<dbReference type="SUPFAM" id="SSF64263">
    <property type="entry name" value="Prokaryotic ribosomal protein L17"/>
    <property type="match status" value="1"/>
</dbReference>
<dbReference type="PROSITE" id="PS01167">
    <property type="entry name" value="RIBOSOMAL_L17"/>
    <property type="match status" value="1"/>
</dbReference>
<comment type="subunit">
    <text evidence="1">Part of the 50S ribosomal subunit. Contacts protein L32.</text>
</comment>
<comment type="similarity">
    <text evidence="1">Belongs to the bacterial ribosomal protein bL17 family.</text>
</comment>
<protein>
    <recommendedName>
        <fullName evidence="1">Large ribosomal subunit protein bL17</fullName>
    </recommendedName>
    <alternativeName>
        <fullName evidence="3">50S ribosomal protein L17</fullName>
    </alternativeName>
</protein>
<evidence type="ECO:0000255" key="1">
    <source>
        <dbReference type="HAMAP-Rule" id="MF_01368"/>
    </source>
</evidence>
<evidence type="ECO:0000256" key="2">
    <source>
        <dbReference type="SAM" id="MobiDB-lite"/>
    </source>
</evidence>
<evidence type="ECO:0000305" key="3"/>
<gene>
    <name evidence="1" type="primary">rplQ</name>
    <name type="ordered locus">Franean1_6021</name>
</gene>
<name>RL17_PARS2</name>
<keyword id="KW-0687">Ribonucleoprotein</keyword>
<keyword id="KW-0689">Ribosomal protein</keyword>
<organism>
    <name type="scientific">Parafrankia sp. (strain EAN1pec)</name>
    <dbReference type="NCBI Taxonomy" id="298653"/>
    <lineage>
        <taxon>Bacteria</taxon>
        <taxon>Bacillati</taxon>
        <taxon>Actinomycetota</taxon>
        <taxon>Actinomycetes</taxon>
        <taxon>Frankiales</taxon>
        <taxon>Frankiaceae</taxon>
        <taxon>Parafrankia</taxon>
    </lineage>
</organism>
<proteinExistence type="inferred from homology"/>
<feature type="chain" id="PRO_1000144429" description="Large ribosomal subunit protein bL17">
    <location>
        <begin position="1"/>
        <end position="195"/>
    </location>
</feature>
<feature type="region of interest" description="Disordered" evidence="2">
    <location>
        <begin position="132"/>
        <end position="195"/>
    </location>
</feature>
<feature type="compositionally biased region" description="Low complexity" evidence="2">
    <location>
        <begin position="159"/>
        <end position="186"/>
    </location>
</feature>